<protein>
    <recommendedName>
        <fullName evidence="14">Zinc finger SWIM domain-containing protein 8</fullName>
    </recommendedName>
</protein>
<feature type="chain" id="PRO_0000311802" description="Zinc finger SWIM domain-containing protein 8">
    <location>
        <begin position="1"/>
        <end position="1837"/>
    </location>
</feature>
<feature type="zinc finger region" description="SWIM-type" evidence="2">
    <location>
        <begin position="172"/>
        <end position="208"/>
    </location>
</feature>
<feature type="region of interest" description="Disordered" evidence="3">
    <location>
        <begin position="45"/>
        <end position="65"/>
    </location>
</feature>
<feature type="region of interest" description="Disordered" evidence="3">
    <location>
        <begin position="514"/>
        <end position="727"/>
    </location>
</feature>
<feature type="region of interest" description="Disordered" evidence="3">
    <location>
        <begin position="803"/>
        <end position="823"/>
    </location>
</feature>
<feature type="region of interest" description="Disordered" evidence="3">
    <location>
        <begin position="1016"/>
        <end position="1232"/>
    </location>
</feature>
<feature type="region of interest" description="Disordered" evidence="3">
    <location>
        <begin position="1442"/>
        <end position="1464"/>
    </location>
</feature>
<feature type="region of interest" description="Disordered" evidence="3">
    <location>
        <begin position="1635"/>
        <end position="1656"/>
    </location>
</feature>
<feature type="compositionally biased region" description="Gly residues" evidence="3">
    <location>
        <begin position="55"/>
        <end position="65"/>
    </location>
</feature>
<feature type="compositionally biased region" description="Basic and acidic residues" evidence="3">
    <location>
        <begin position="523"/>
        <end position="532"/>
    </location>
</feature>
<feature type="compositionally biased region" description="Basic and acidic residues" evidence="3">
    <location>
        <begin position="566"/>
        <end position="575"/>
    </location>
</feature>
<feature type="compositionally biased region" description="Gly residues" evidence="3">
    <location>
        <begin position="579"/>
        <end position="602"/>
    </location>
</feature>
<feature type="compositionally biased region" description="Polar residues" evidence="3">
    <location>
        <begin position="1019"/>
        <end position="1040"/>
    </location>
</feature>
<feature type="compositionally biased region" description="Gly residues" evidence="3">
    <location>
        <begin position="1119"/>
        <end position="1130"/>
    </location>
</feature>
<feature type="compositionally biased region" description="Polar residues" evidence="3">
    <location>
        <begin position="1144"/>
        <end position="1159"/>
    </location>
</feature>
<feature type="compositionally biased region" description="Low complexity" evidence="3">
    <location>
        <begin position="1174"/>
        <end position="1209"/>
    </location>
</feature>
<feature type="compositionally biased region" description="Basic and acidic residues" evidence="3">
    <location>
        <begin position="1210"/>
        <end position="1226"/>
    </location>
</feature>
<feature type="compositionally biased region" description="Gly residues" evidence="3">
    <location>
        <begin position="1447"/>
        <end position="1464"/>
    </location>
</feature>
<feature type="modified residue" description="Phosphoserine" evidence="19">
    <location>
        <position position="36"/>
    </location>
</feature>
<feature type="modified residue" description="Phosphoserine" evidence="19">
    <location>
        <position position="48"/>
    </location>
</feature>
<feature type="modified residue" description="Phosphoserine" evidence="1">
    <location>
        <position position="53"/>
    </location>
</feature>
<feature type="modified residue" description="Phosphoserine" evidence="18">
    <location>
        <position position="437"/>
    </location>
</feature>
<feature type="modified residue" description="Phosphoserine" evidence="17">
    <location>
        <position position="567"/>
    </location>
</feature>
<feature type="modified residue" description="Phosphothreonine" evidence="19">
    <location>
        <position position="1139"/>
    </location>
</feature>
<feature type="modified residue" description="Phosphoserine" evidence="1">
    <location>
        <position position="1153"/>
    </location>
</feature>
<feature type="modified residue" description="Phosphoserine" evidence="1">
    <location>
        <position position="1156"/>
    </location>
</feature>
<feature type="modified residue" description="Phosphoserine" evidence="19">
    <location>
        <position position="1160"/>
    </location>
</feature>
<feature type="modified residue" description="Phosphoserine" evidence="18">
    <location>
        <position position="1267"/>
    </location>
</feature>
<feature type="modified residue" description="Phosphoserine" evidence="17">
    <location>
        <position position="1836"/>
    </location>
</feature>
<feature type="splice variant" id="VSP_029586" description="In isoform 3 and isoform 4." evidence="9 10">
    <original>P</original>
    <variation>PVVSPT</variation>
    <location>
        <position position="936"/>
    </location>
</feature>
<feature type="splice variant" id="VSP_029587" description="In isoform 3." evidence="10">
    <original>K</original>
    <variation>KVTASVFQ</variation>
    <location>
        <position position="1006"/>
    </location>
</feature>
<feature type="splice variant" id="VSP_029590" description="In isoform 2, isoform 3 and isoform 5." evidence="8 10">
    <original>CELWGQGTV</original>
    <variation>L</variation>
    <location>
        <begin position="1604"/>
        <end position="1612"/>
    </location>
</feature>
<feature type="splice variant" id="VSP_029591" description="In isoform 2." evidence="10">
    <original>VNYVHQFCVGAAKGVLSPFVLQEIVMETLQRLSPAHAHNHLRAPAFHQLVQRCQQAYMQYIHHRLIHLTPADYDDFVNAIRSARSAFCLTPMGMMQFNDILQNLKRSKQTKELWQRVSLEMATFSP</original>
    <variation>DRHGDAAAAESRSCPQPPACPGLPPTGAALPAGIHAVHPPPLDSPDSCGLRRLCECDPECPQRLLPDAHGHDAVQRHPTEPQAQQTDQGAVAAGLTRDGHLLPLSLSPLGSYTGTQACGYGGPSHRGSETWLDRSSSLSSLVAQTDSCSWAIAWGQDVSHPRSLGLGETALSGRGRWVASGIYLAFINI</variation>
    <location>
        <begin position="1712"/>
        <end position="1837"/>
    </location>
</feature>
<feature type="sequence conflict" description="In Ref. 5; BAB14664." evidence="14" ref="5">
    <original>A</original>
    <variation>D</variation>
    <location>
        <position position="751"/>
    </location>
</feature>
<feature type="sequence conflict" description="In Ref. 5; BAB14664." evidence="14" ref="5">
    <original>K</original>
    <variation>M</variation>
    <location>
        <position position="762"/>
    </location>
</feature>
<feature type="sequence conflict" description="In Ref. 5; BAB14664." evidence="14" ref="5">
    <original>F</original>
    <variation>S</variation>
    <location>
        <position position="774"/>
    </location>
</feature>
<feature type="sequence conflict" description="In Ref. 5; BAB14664." evidence="14" ref="5">
    <original>A</original>
    <variation>T</variation>
    <location>
        <position position="1052"/>
    </location>
</feature>
<feature type="sequence conflict" description="In Ref. 5; BAB14664." evidence="14" ref="5">
    <original>K</original>
    <variation>M</variation>
    <location>
        <position position="1136"/>
    </location>
</feature>
<feature type="sequence conflict" description="In Ref. 5; BAB14664." evidence="14" ref="5">
    <original>R</original>
    <variation>Q</variation>
    <location>
        <position position="1165"/>
    </location>
</feature>
<feature type="sequence conflict" description="In Ref. 5; BAB14664." evidence="14" ref="5">
    <original>S</original>
    <variation>N</variation>
    <location>
        <position position="1184"/>
    </location>
</feature>
<feature type="sequence conflict" description="In Ref. 5; BAB14664." evidence="14" ref="5">
    <original>A</original>
    <variation>T</variation>
    <location>
        <position position="1252"/>
    </location>
</feature>
<feature type="sequence conflict" description="In Ref. 5; BAB14664." evidence="14" ref="5">
    <original>E</original>
    <variation>V</variation>
    <location>
        <position position="1401"/>
    </location>
</feature>
<feature type="sequence conflict" description="In Ref. 5; BAB14664." evidence="14" ref="5">
    <original>R</original>
    <variation>S</variation>
    <location>
        <position position="1775"/>
    </location>
</feature>
<accession>A7E2V4</accession>
<accession>B2RP37</accession>
<accession>O94987</accession>
<accession>Q17RS8</accession>
<accession>Q2TAB8</accession>
<accession>Q6P439</accession>
<accession>Q8IW81</accession>
<accession>Q8NB34</accession>
<accession>Q9H8F3</accession>
<name>ZSWM8_HUMAN</name>
<reference key="1">
    <citation type="journal article" date="1998" name="DNA Res.">
        <title>Prediction of the coding sequences of unidentified human genes. XII. The complete sequences of 100 new cDNA clones from brain which code for large proteins in vitro.</title>
        <authorList>
            <person name="Nagase T."/>
            <person name="Ishikawa K."/>
            <person name="Suyama M."/>
            <person name="Kikuno R."/>
            <person name="Hirosawa M."/>
            <person name="Miyajima N."/>
            <person name="Tanaka A."/>
            <person name="Kotani H."/>
            <person name="Nomura N."/>
            <person name="Ohara O."/>
        </authorList>
    </citation>
    <scope>NUCLEOTIDE SEQUENCE [LARGE SCALE MRNA] (ISOFORM 5)</scope>
    <source>
        <tissue>Brain</tissue>
    </source>
</reference>
<reference key="2">
    <citation type="submission" date="2008-12" db="EMBL/GenBank/DDBJ databases">
        <authorList>
            <person name="Ohara O."/>
            <person name="Suyama M."/>
            <person name="Kikuno R."/>
            <person name="Nagase T."/>
            <person name="Ishikawa K."/>
        </authorList>
    </citation>
    <scope>SEQUENCE REVISION</scope>
</reference>
<reference key="3">
    <citation type="journal article" date="2004" name="Nature">
        <title>The DNA sequence and comparative analysis of human chromosome 10.</title>
        <authorList>
            <person name="Deloukas P."/>
            <person name="Earthrowl M.E."/>
            <person name="Grafham D.V."/>
            <person name="Rubenfield M."/>
            <person name="French L."/>
            <person name="Steward C.A."/>
            <person name="Sims S.K."/>
            <person name="Jones M.C."/>
            <person name="Searle S."/>
            <person name="Scott C."/>
            <person name="Howe K."/>
            <person name="Hunt S.E."/>
            <person name="Andrews T.D."/>
            <person name="Gilbert J.G.R."/>
            <person name="Swarbreck D."/>
            <person name="Ashurst J.L."/>
            <person name="Taylor A."/>
            <person name="Battles J."/>
            <person name="Bird C.P."/>
            <person name="Ainscough R."/>
            <person name="Almeida J.P."/>
            <person name="Ashwell R.I.S."/>
            <person name="Ambrose K.D."/>
            <person name="Babbage A.K."/>
            <person name="Bagguley C.L."/>
            <person name="Bailey J."/>
            <person name="Banerjee R."/>
            <person name="Bates K."/>
            <person name="Beasley H."/>
            <person name="Bray-Allen S."/>
            <person name="Brown A.J."/>
            <person name="Brown J.Y."/>
            <person name="Burford D.C."/>
            <person name="Burrill W."/>
            <person name="Burton J."/>
            <person name="Cahill P."/>
            <person name="Camire D."/>
            <person name="Carter N.P."/>
            <person name="Chapman J.C."/>
            <person name="Clark S.Y."/>
            <person name="Clarke G."/>
            <person name="Clee C.M."/>
            <person name="Clegg S."/>
            <person name="Corby N."/>
            <person name="Coulson A."/>
            <person name="Dhami P."/>
            <person name="Dutta I."/>
            <person name="Dunn M."/>
            <person name="Faulkner L."/>
            <person name="Frankish A."/>
            <person name="Frankland J.A."/>
            <person name="Garner P."/>
            <person name="Garnett J."/>
            <person name="Gribble S."/>
            <person name="Griffiths C."/>
            <person name="Grocock R."/>
            <person name="Gustafson E."/>
            <person name="Hammond S."/>
            <person name="Harley J.L."/>
            <person name="Hart E."/>
            <person name="Heath P.D."/>
            <person name="Ho T.P."/>
            <person name="Hopkins B."/>
            <person name="Horne J."/>
            <person name="Howden P.J."/>
            <person name="Huckle E."/>
            <person name="Hynds C."/>
            <person name="Johnson C."/>
            <person name="Johnson D."/>
            <person name="Kana A."/>
            <person name="Kay M."/>
            <person name="Kimberley A.M."/>
            <person name="Kershaw J.K."/>
            <person name="Kokkinaki M."/>
            <person name="Laird G.K."/>
            <person name="Lawlor S."/>
            <person name="Lee H.M."/>
            <person name="Leongamornlert D.A."/>
            <person name="Laird G."/>
            <person name="Lloyd C."/>
            <person name="Lloyd D.M."/>
            <person name="Loveland J."/>
            <person name="Lovell J."/>
            <person name="McLaren S."/>
            <person name="McLay K.E."/>
            <person name="McMurray A."/>
            <person name="Mashreghi-Mohammadi M."/>
            <person name="Matthews L."/>
            <person name="Milne S."/>
            <person name="Nickerson T."/>
            <person name="Nguyen M."/>
            <person name="Overton-Larty E."/>
            <person name="Palmer S.A."/>
            <person name="Pearce A.V."/>
            <person name="Peck A.I."/>
            <person name="Pelan S."/>
            <person name="Phillimore B."/>
            <person name="Porter K."/>
            <person name="Rice C.M."/>
            <person name="Rogosin A."/>
            <person name="Ross M.T."/>
            <person name="Sarafidou T."/>
            <person name="Sehra H.K."/>
            <person name="Shownkeen R."/>
            <person name="Skuce C.D."/>
            <person name="Smith M."/>
            <person name="Standring L."/>
            <person name="Sycamore N."/>
            <person name="Tester J."/>
            <person name="Thorpe A."/>
            <person name="Torcasso W."/>
            <person name="Tracey A."/>
            <person name="Tromans A."/>
            <person name="Tsolas J."/>
            <person name="Wall M."/>
            <person name="Walsh J."/>
            <person name="Wang H."/>
            <person name="Weinstock K."/>
            <person name="West A.P."/>
            <person name="Willey D.L."/>
            <person name="Whitehead S.L."/>
            <person name="Wilming L."/>
            <person name="Wray P.W."/>
            <person name="Young L."/>
            <person name="Chen Y."/>
            <person name="Lovering R.C."/>
            <person name="Moschonas N.K."/>
            <person name="Siebert R."/>
            <person name="Fechtel K."/>
            <person name="Bentley D."/>
            <person name="Durbin R.M."/>
            <person name="Hubbard T."/>
            <person name="Doucette-Stamm L."/>
            <person name="Beck S."/>
            <person name="Smith D.R."/>
            <person name="Rogers J."/>
        </authorList>
    </citation>
    <scope>NUCLEOTIDE SEQUENCE [LARGE SCALE GENOMIC DNA]</scope>
</reference>
<reference key="4">
    <citation type="journal article" date="2004" name="Genome Res.">
        <title>The status, quality, and expansion of the NIH full-length cDNA project: the Mammalian Gene Collection (MGC).</title>
        <authorList>
            <consortium name="The MGC Project Team"/>
        </authorList>
    </citation>
    <scope>NUCLEOTIDE SEQUENCE [LARGE SCALE MRNA] (ISOFORM 1)</scope>
    <scope>NUCLEOTIDE SEQUENCE [LARGE SCALE MRNA] OF 662-1837 (ISOFORM 2)</scope>
    <scope>NUCLEOTIDE SEQUENCE [LARGE SCALE MRNA] OF 741-1837 (ISOFORM 3)</scope>
    <source>
        <tissue>Brain</tissue>
        <tissue>Skin</tissue>
        <tissue>Uterus</tissue>
    </source>
</reference>
<reference key="5">
    <citation type="journal article" date="2004" name="Nat. Genet.">
        <title>Complete sequencing and characterization of 21,243 full-length human cDNAs.</title>
        <authorList>
            <person name="Ota T."/>
            <person name="Suzuki Y."/>
            <person name="Nishikawa T."/>
            <person name="Otsuki T."/>
            <person name="Sugiyama T."/>
            <person name="Irie R."/>
            <person name="Wakamatsu A."/>
            <person name="Hayashi K."/>
            <person name="Sato H."/>
            <person name="Nagai K."/>
            <person name="Kimura K."/>
            <person name="Makita H."/>
            <person name="Sekine M."/>
            <person name="Obayashi M."/>
            <person name="Nishi T."/>
            <person name="Shibahara T."/>
            <person name="Tanaka T."/>
            <person name="Ishii S."/>
            <person name="Yamamoto J."/>
            <person name="Saito K."/>
            <person name="Kawai Y."/>
            <person name="Isono Y."/>
            <person name="Nakamura Y."/>
            <person name="Nagahari K."/>
            <person name="Murakami K."/>
            <person name="Yasuda T."/>
            <person name="Iwayanagi T."/>
            <person name="Wagatsuma M."/>
            <person name="Shiratori A."/>
            <person name="Sudo H."/>
            <person name="Hosoiri T."/>
            <person name="Kaku Y."/>
            <person name="Kodaira H."/>
            <person name="Kondo H."/>
            <person name="Sugawara M."/>
            <person name="Takahashi M."/>
            <person name="Kanda K."/>
            <person name="Yokoi T."/>
            <person name="Furuya T."/>
            <person name="Kikkawa E."/>
            <person name="Omura Y."/>
            <person name="Abe K."/>
            <person name="Kamihara K."/>
            <person name="Katsuta N."/>
            <person name="Sato K."/>
            <person name="Tanikawa M."/>
            <person name="Yamazaki M."/>
            <person name="Ninomiya K."/>
            <person name="Ishibashi T."/>
            <person name="Yamashita H."/>
            <person name="Murakawa K."/>
            <person name="Fujimori K."/>
            <person name="Tanai H."/>
            <person name="Kimata M."/>
            <person name="Watanabe M."/>
            <person name="Hiraoka S."/>
            <person name="Chiba Y."/>
            <person name="Ishida S."/>
            <person name="Ono Y."/>
            <person name="Takiguchi S."/>
            <person name="Watanabe S."/>
            <person name="Yosida M."/>
            <person name="Hotuta T."/>
            <person name="Kusano J."/>
            <person name="Kanehori K."/>
            <person name="Takahashi-Fujii A."/>
            <person name="Hara H."/>
            <person name="Tanase T.-O."/>
            <person name="Nomura Y."/>
            <person name="Togiya S."/>
            <person name="Komai F."/>
            <person name="Hara R."/>
            <person name="Takeuchi K."/>
            <person name="Arita M."/>
            <person name="Imose N."/>
            <person name="Musashino K."/>
            <person name="Yuuki H."/>
            <person name="Oshima A."/>
            <person name="Sasaki N."/>
            <person name="Aotsuka S."/>
            <person name="Yoshikawa Y."/>
            <person name="Matsunawa H."/>
            <person name="Ichihara T."/>
            <person name="Shiohata N."/>
            <person name="Sano S."/>
            <person name="Moriya S."/>
            <person name="Momiyama H."/>
            <person name="Satoh N."/>
            <person name="Takami S."/>
            <person name="Terashima Y."/>
            <person name="Suzuki O."/>
            <person name="Nakagawa S."/>
            <person name="Senoh A."/>
            <person name="Mizoguchi H."/>
            <person name="Goto Y."/>
            <person name="Shimizu F."/>
            <person name="Wakebe H."/>
            <person name="Hishigaki H."/>
            <person name="Watanabe T."/>
            <person name="Sugiyama A."/>
            <person name="Takemoto M."/>
            <person name="Kawakami B."/>
            <person name="Yamazaki M."/>
            <person name="Watanabe K."/>
            <person name="Kumagai A."/>
            <person name="Itakura S."/>
            <person name="Fukuzumi Y."/>
            <person name="Fujimori Y."/>
            <person name="Komiyama M."/>
            <person name="Tashiro H."/>
            <person name="Tanigami A."/>
            <person name="Fujiwara T."/>
            <person name="Ono T."/>
            <person name="Yamada K."/>
            <person name="Fujii Y."/>
            <person name="Ozaki K."/>
            <person name="Hirao M."/>
            <person name="Ohmori Y."/>
            <person name="Kawabata A."/>
            <person name="Hikiji T."/>
            <person name="Kobatake N."/>
            <person name="Inagaki H."/>
            <person name="Ikema Y."/>
            <person name="Okamoto S."/>
            <person name="Okitani R."/>
            <person name="Kawakami T."/>
            <person name="Noguchi S."/>
            <person name="Itoh T."/>
            <person name="Shigeta K."/>
            <person name="Senba T."/>
            <person name="Matsumura K."/>
            <person name="Nakajima Y."/>
            <person name="Mizuno T."/>
            <person name="Morinaga M."/>
            <person name="Sasaki M."/>
            <person name="Togashi T."/>
            <person name="Oyama M."/>
            <person name="Hata H."/>
            <person name="Watanabe M."/>
            <person name="Komatsu T."/>
            <person name="Mizushima-Sugano J."/>
            <person name="Satoh T."/>
            <person name="Shirai Y."/>
            <person name="Takahashi Y."/>
            <person name="Nakagawa K."/>
            <person name="Okumura K."/>
            <person name="Nagase T."/>
            <person name="Nomura N."/>
            <person name="Kikuchi H."/>
            <person name="Masuho Y."/>
            <person name="Yamashita R."/>
            <person name="Nakai K."/>
            <person name="Yada T."/>
            <person name="Nakamura Y."/>
            <person name="Ohara O."/>
            <person name="Isogai T."/>
            <person name="Sugano S."/>
        </authorList>
    </citation>
    <scope>NUCLEOTIDE SEQUENCE [LARGE SCALE MRNA] OF 1-69 (ISOFORM 1)</scope>
    <scope>NUCLEOTIDE SEQUENCE [LARGE SCALE MRNA] OF 732-1837 (ISOFORM 4)</scope>
    <source>
        <tissue>Brain</tissue>
        <tissue>Placenta</tissue>
    </source>
</reference>
<reference key="6">
    <citation type="journal article" date="2008" name="Proc. Natl. Acad. Sci. U.S.A.">
        <title>A quantitative atlas of mitotic phosphorylation.</title>
        <authorList>
            <person name="Dephoure N."/>
            <person name="Zhou C."/>
            <person name="Villen J."/>
            <person name="Beausoleil S.A."/>
            <person name="Bakalarski C.E."/>
            <person name="Elledge S.J."/>
            <person name="Gygi S.P."/>
        </authorList>
    </citation>
    <scope>IDENTIFICATION BY MASS SPECTROMETRY [LARGE SCALE ANALYSIS]</scope>
    <source>
        <tissue>Cervix carcinoma</tissue>
    </source>
</reference>
<reference key="7">
    <citation type="journal article" date="2010" name="Sci. Signal.">
        <title>Quantitative phosphoproteomics reveals widespread full phosphorylation site occupancy during mitosis.</title>
        <authorList>
            <person name="Olsen J.V."/>
            <person name="Vermeulen M."/>
            <person name="Santamaria A."/>
            <person name="Kumar C."/>
            <person name="Miller M.L."/>
            <person name="Jensen L.J."/>
            <person name="Gnad F."/>
            <person name="Cox J."/>
            <person name="Jensen T.S."/>
            <person name="Nigg E.A."/>
            <person name="Brunak S."/>
            <person name="Mann M."/>
        </authorList>
    </citation>
    <scope>PHOSPHORYLATION [LARGE SCALE ANALYSIS] AT SER-567 AND SER-1836</scope>
    <scope>IDENTIFICATION BY MASS SPECTROMETRY [LARGE SCALE ANALYSIS]</scope>
    <source>
        <tissue>Cervix carcinoma</tissue>
    </source>
</reference>
<reference key="8">
    <citation type="journal article" date="2011" name="BMC Syst. Biol.">
        <title>Initial characterization of the human central proteome.</title>
        <authorList>
            <person name="Burkard T.R."/>
            <person name="Planyavsky M."/>
            <person name="Kaupe I."/>
            <person name="Breitwieser F.P."/>
            <person name="Buerckstuemmer T."/>
            <person name="Bennett K.L."/>
            <person name="Superti-Furga G."/>
            <person name="Colinge J."/>
        </authorList>
    </citation>
    <scope>IDENTIFICATION BY MASS SPECTROMETRY [LARGE SCALE ANALYSIS]</scope>
</reference>
<reference key="9">
    <citation type="journal article" date="2013" name="J. Proteome Res.">
        <title>Toward a comprehensive characterization of a human cancer cell phosphoproteome.</title>
        <authorList>
            <person name="Zhou H."/>
            <person name="Di Palma S."/>
            <person name="Preisinger C."/>
            <person name="Peng M."/>
            <person name="Polat A.N."/>
            <person name="Heck A.J."/>
            <person name="Mohammed S."/>
        </authorList>
    </citation>
    <scope>PHOSPHORYLATION [LARGE SCALE ANALYSIS] AT SER-437 AND SER-1267</scope>
    <scope>IDENTIFICATION BY MASS SPECTROMETRY [LARGE SCALE ANALYSIS]</scope>
    <source>
        <tissue>Cervix carcinoma</tissue>
        <tissue>Erythroleukemia</tissue>
    </source>
</reference>
<reference key="10">
    <citation type="journal article" date="2014" name="J. Proteomics">
        <title>An enzyme assisted RP-RPLC approach for in-depth analysis of human liver phosphoproteome.</title>
        <authorList>
            <person name="Bian Y."/>
            <person name="Song C."/>
            <person name="Cheng K."/>
            <person name="Dong M."/>
            <person name="Wang F."/>
            <person name="Huang J."/>
            <person name="Sun D."/>
            <person name="Wang L."/>
            <person name="Ye M."/>
            <person name="Zou H."/>
        </authorList>
    </citation>
    <scope>PHOSPHORYLATION [LARGE SCALE ANALYSIS] AT SER-36; SER-48; THR-1139 AND SER-1160</scope>
    <scope>IDENTIFICATION BY MASS SPECTROMETRY [LARGE SCALE ANALYSIS]</scope>
    <source>
        <tissue>Liver</tissue>
    </source>
</reference>
<reference key="11">
    <citation type="journal article" date="2013" name="Neuron">
        <title>The EBAX-type Cullin-RING E3 ligase and Hsp90 guard the protein quality of the SAX-3/Robo receptor in developing neurons.</title>
        <authorList>
            <person name="Wang Z."/>
            <person name="Hou Y."/>
            <person name="Guo X."/>
            <person name="van der Voet M."/>
            <person name="Boxem M."/>
            <person name="Dixon J.E."/>
            <person name="Chisholm A.D."/>
            <person name="Jin Y."/>
        </authorList>
    </citation>
    <scope>FUNCTION</scope>
</reference>
<reference key="12">
    <citation type="journal article" date="2020" name="Science">
        <title>A ubiquitin ligase mediates target-directed microRNA decay independently of tailing and trimming.</title>
        <authorList>
            <person name="Han J."/>
            <person name="LaVigne C.A."/>
            <person name="Jones B.T."/>
            <person name="Zhang H."/>
            <person name="Gillett F."/>
            <person name="Mendell J.T."/>
        </authorList>
    </citation>
    <scope>FUNCTION</scope>
    <scope>PATHWAY</scope>
    <scope>IDENTIFICATION IN A SCF-LIKE E3 UBIQUITIN-PROTEIN LIGASE COMPLEX</scope>
</reference>
<reference key="13">
    <citation type="journal article" date="2020" name="Science">
        <title>The ZSWIM8 ubiquitin ligase mediates target-directed microRNA degradation.</title>
        <authorList>
            <person name="Shi C.Y."/>
            <person name="Kingston E.R."/>
            <person name="Kleaveland B."/>
            <person name="Lin D.H."/>
            <person name="Stubna M.W."/>
            <person name="Bartel D.P."/>
        </authorList>
    </citation>
    <scope>FUNCTION</scope>
    <scope>PATHWAY</scope>
</reference>
<reference key="14">
    <citation type="journal article" date="2023" name="Cereb. Cortex">
        <title>The ZSWIM8 ubiquitin ligase regulates neurodevelopment by guarding the protein quality of intrinsically disordered Dab1.</title>
        <authorList>
            <person name="Wang G."/>
            <person name="Lei J."/>
            <person name="Wang Y."/>
            <person name="Yu J."/>
            <person name="He Y."/>
            <person name="Zhao W."/>
            <person name="Hu Z."/>
            <person name="Xu Z."/>
            <person name="Jin Y."/>
            <person name="Gu Y."/>
            <person name="Guo X."/>
            <person name="Yang B."/>
            <person name="Gao Z."/>
            <person name="Wang Z."/>
        </authorList>
    </citation>
    <scope>FUNCTION</scope>
    <scope>INTERACTION WITH DAB1</scope>
</reference>
<reference key="15">
    <citation type="journal article" date="2024" name="Proc. Natl. Acad. Sci. U.S.A.">
        <title>Zika virus NS5 protein inhibits type I interferon signaling via CRL3 E3 ubiquitin ligase-mediated degradation of STAT2.</title>
        <authorList>
            <person name="Ren W."/>
            <person name="Fu C."/>
            <person name="Zhang Y."/>
            <person name="Ju X."/>
            <person name="Jiang X."/>
            <person name="Song J."/>
            <person name="Gong M."/>
            <person name="Li Z."/>
            <person name="Fan W."/>
            <person name="Yao J."/>
            <person name="Ding Q."/>
        </authorList>
    </citation>
    <scope>FUNCTION (MICROBIAL INFECTION)</scope>
    <scope>INTERACTION WITH ZIKA VIRUS PROTEIN NS5 (MICROBIAL INFECTION)</scope>
</reference>
<sequence length="1837" mass="197297">MELMFAEWEDGERFSFEDSDRFEEDSLCSFISEAESLCQNWRGWRKQSAGPNSPTGGGGGGGSGGTRMRDGLVIPLVELSAKQVAFHIPFEVVEKVYPPVPEQLQLRIAFWSFPENEEDIRLYSCLANGSADEFQRGDQLFRMRAVKDPLQIGFHLSATVVPPQMVPPKGAYNVAVMFDRCRVTSCSCTCGAGAKWCTHVVALCLFRIHNASAVCLRAPVSESLSRLQRDQLQKFAQYLISELPQQILPTAQRLLDELLSSQSTAINTVCGAPDPTAGPSASDQSTWYLDESTLTDNIKKTLHKFCGPSPVVFSDVNSMYLSSTEPPAAAEWACLLRPLRGREPEGVWNLLSIVREMFKRRDSNAAPLLEILTDQCLTYEQITGWWYSVRTSASHSSASGHTGRSNGQSEVAAHACASMCDEMVTLWRLAVLDPALSPQRRRELCTQLRQWQLKVIENVKRGQHKKTLERLFPGFRPAVEACYFNWEEAYPLPGVTYSGTDRKLALCWARALPSRPGASRSGGLEESRDRPRPLPTEPAVRPKEPGTKRKGLGEGVPSSQRGPRRLSAEGGDKALHKMGPGGGKAKALGGAGSGSKGSAGGGSKRRLSSEDSSLEPDLAEMSLDDSSLALGAEASTFGGFPESPPPCPLHGGSRGPSTFLPEPPDTYEEDGGVYFSEGPEPPTASVGPPGLLPGDVCTQDDLPSTDESGNGLPKTKEAAPAVGEEDDDYQAYYLNAQDGAGGEEEKAEGGAGEEHDLFAGLKPLEQESRMEVLFACAEALHAHGYSSEASRLTVELAQDLLANPPDLKVEPPPAKGKKNKVSTSRQTWVATNTLSKAAFLLTVLSERPEHHNLAFRVGMFALELQRPPASTKALEVKLAYQESEVAALLKKIPLGPSEMSTMRCRAEELREGTLCDYRPVLPLMLASFIFDVLCAPGSRPPSRNWNSETPGDEELGFEAAVAALGMKTTVSEAEHPLLCEGTRREKGDLALALMITYKDDQAKLKKILDKLLDRESQTHKPQTLSSFYSSSRPTTASQRSPSKHGGPSAPGALQPLTSGSAGPAQPGSVAGAGPGPTEGFTEKNVPESSPHSPCEGLPSEAALTPRPEGKVPSRLALGSRGGYNGRGWGSPGRPKKKHTGMASIDSSAPETTSDSSPTLSRRPLRGGWAPTSWGRGQDSDSISSSSSDSLGSSSSSGSRRASASGGARAKTVEVGRYKGRRPESHAPHVPNQPSEAAAHFYFELAKTVLIKAGGNSSTSIFTHPSSSGGHQGPHRNLHLCAFEIGLYALGLHNFVSPNWLSRTYSSHVSWITGQAMEIGSAALTILVECWDGHLTPPEVASLADRASRARDSNMVRAAAELALSCLPHAHALNPNEIQRALVQCKEQDNLMLEKACMAVEEAAKGGGVYPEVLFEVAHQWFWLYEQTAGGSSTAREGATSCSASGIRAGGEAGRGMPEGRGGPGTEPVTVAAAAVTAAATVVPVISVGSSLYPGPGLGHGHSPGLHPYTALQPHLPCSPQYLTHPAHPAHPMPHMPRPAVFPVPSSAYPQGVHPAFLGAQYPYSVTPPSLAATAVSFPVPSMAPITVHPYHTEPGLPLPTSVACELWGQGTVSSVHPASTFPAIQGASLPALTTQPSPLVSGGFPPPEEETHSQPVNPHSLHHLHAAYRVGMLALEMLGRRAHNDHPNNFSRSPPYTDDVKWLLGLAAKLGVNYVHQFCVGAAKGVLSPFVLQEIVMETLQRLSPAHAHNHLRAPAFHQLVQRCQQAYMQYIHHRLIHLTPADYDDFVNAIRSARSAFCLTPMGMMQFNDILQNLKRSKQTKELWQRVSLEMATFSP</sequence>
<gene>
    <name evidence="11 12 13 16" type="primary">ZSWIM8</name>
    <name evidence="8" type="synonym">KIAA0913</name>
</gene>
<proteinExistence type="evidence at protein level"/>
<organism>
    <name type="scientific">Homo sapiens</name>
    <name type="common">Human</name>
    <dbReference type="NCBI Taxonomy" id="9606"/>
    <lineage>
        <taxon>Eukaryota</taxon>
        <taxon>Metazoa</taxon>
        <taxon>Chordata</taxon>
        <taxon>Craniata</taxon>
        <taxon>Vertebrata</taxon>
        <taxon>Euteleostomi</taxon>
        <taxon>Mammalia</taxon>
        <taxon>Eutheria</taxon>
        <taxon>Euarchontoglires</taxon>
        <taxon>Primates</taxon>
        <taxon>Haplorrhini</taxon>
        <taxon>Catarrhini</taxon>
        <taxon>Hominidae</taxon>
        <taxon>Homo</taxon>
    </lineage>
</organism>
<dbReference type="EMBL" id="AB020720">
    <property type="protein sequence ID" value="BAA74936.2"/>
    <property type="status" value="ALT_SEQ"/>
    <property type="molecule type" value="mRNA"/>
</dbReference>
<dbReference type="EMBL" id="AC022400">
    <property type="status" value="NOT_ANNOTATED_CDS"/>
    <property type="molecule type" value="Genomic_DNA"/>
</dbReference>
<dbReference type="EMBL" id="BC040726">
    <property type="protein sequence ID" value="AAH40726.1"/>
    <property type="molecule type" value="mRNA"/>
</dbReference>
<dbReference type="EMBL" id="BC063694">
    <property type="protein sequence ID" value="AAH63694.1"/>
    <property type="molecule type" value="mRNA"/>
</dbReference>
<dbReference type="EMBL" id="BC111006">
    <property type="protein sequence ID" value="AAI11007.1"/>
    <property type="molecule type" value="mRNA"/>
</dbReference>
<dbReference type="EMBL" id="BC117205">
    <property type="protein sequence ID" value="AAI17206.1"/>
    <property type="molecule type" value="mRNA"/>
</dbReference>
<dbReference type="EMBL" id="BC137249">
    <property type="protein sequence ID" value="AAI37250.1"/>
    <property type="status" value="ALT_SEQ"/>
    <property type="molecule type" value="mRNA"/>
</dbReference>
<dbReference type="EMBL" id="BC137250">
    <property type="protein sequence ID" value="AAI37251.1"/>
    <property type="status" value="ALT_SEQ"/>
    <property type="molecule type" value="mRNA"/>
</dbReference>
<dbReference type="EMBL" id="BC151206">
    <property type="protein sequence ID" value="AAI51207.1"/>
    <property type="molecule type" value="mRNA"/>
</dbReference>
<dbReference type="EMBL" id="AK023742">
    <property type="protein sequence ID" value="BAB14664.1"/>
    <property type="status" value="ALT_INIT"/>
    <property type="molecule type" value="mRNA"/>
</dbReference>
<dbReference type="EMBL" id="AK091621">
    <property type="protein sequence ID" value="BAC03709.1"/>
    <property type="status" value="ALT_SEQ"/>
    <property type="molecule type" value="mRNA"/>
</dbReference>
<dbReference type="CCDS" id="CCDS44440.1">
    <molecule id="A7E2V4-4"/>
</dbReference>
<dbReference type="CCDS" id="CCDS60560.1">
    <molecule id="A7E2V4-1"/>
</dbReference>
<dbReference type="RefSeq" id="NP_001229416.1">
    <molecule id="A7E2V4-1"/>
    <property type="nucleotide sequence ID" value="NM_001242487.2"/>
</dbReference>
<dbReference type="RefSeq" id="NP_001229417.1">
    <molecule id="A7E2V4-2"/>
    <property type="nucleotide sequence ID" value="NM_001242488.2"/>
</dbReference>
<dbReference type="RefSeq" id="NP_055852.2">
    <molecule id="A7E2V4-4"/>
    <property type="nucleotide sequence ID" value="NM_015037.4"/>
</dbReference>
<dbReference type="RefSeq" id="XP_006717788.1">
    <molecule id="A7E2V4-5"/>
    <property type="nucleotide sequence ID" value="XM_006717725.4"/>
</dbReference>
<dbReference type="RefSeq" id="XP_054221258.1">
    <molecule id="A7E2V4-5"/>
    <property type="nucleotide sequence ID" value="XM_054365283.1"/>
</dbReference>
<dbReference type="SMR" id="A7E2V4"/>
<dbReference type="BioGRID" id="116690">
    <property type="interactions" value="74"/>
</dbReference>
<dbReference type="FunCoup" id="A7E2V4">
    <property type="interactions" value="1532"/>
</dbReference>
<dbReference type="IntAct" id="A7E2V4">
    <property type="interactions" value="52"/>
</dbReference>
<dbReference type="MINT" id="A7E2V4"/>
<dbReference type="STRING" id="9606.ENSP00000381693"/>
<dbReference type="GlyGen" id="A7E2V4">
    <property type="glycosylation" value="7 sites, 1 N-linked glycan (1 site), 1 O-linked glycan (2 sites)"/>
</dbReference>
<dbReference type="iPTMnet" id="A7E2V4"/>
<dbReference type="PhosphoSitePlus" id="A7E2V4"/>
<dbReference type="BioMuta" id="ZSWIM8"/>
<dbReference type="jPOST" id="A7E2V4"/>
<dbReference type="MassIVE" id="A7E2V4"/>
<dbReference type="PaxDb" id="9606-ENSP00000381693"/>
<dbReference type="PeptideAtlas" id="A7E2V4"/>
<dbReference type="ProteomicsDB" id="1797">
    <molecule id="A7E2V4-1"/>
</dbReference>
<dbReference type="ProteomicsDB" id="1798">
    <molecule id="A7E2V4-2"/>
</dbReference>
<dbReference type="ProteomicsDB" id="1799">
    <molecule id="A7E2V4-3"/>
</dbReference>
<dbReference type="ProteomicsDB" id="1800">
    <molecule id="A7E2V4-4"/>
</dbReference>
<dbReference type="ProteomicsDB" id="1801">
    <molecule id="A7E2V4-5"/>
</dbReference>
<dbReference type="Pumba" id="A7E2V4"/>
<dbReference type="Antibodypedia" id="48437">
    <property type="antibodies" value="7 antibodies from 6 providers"/>
</dbReference>
<dbReference type="DNASU" id="23053"/>
<dbReference type="Ensembl" id="ENST00000398706.6">
    <molecule id="A7E2V4-4"/>
    <property type="protein sequence ID" value="ENSP00000381693.2"/>
    <property type="gene ID" value="ENSG00000214655.11"/>
</dbReference>
<dbReference type="Ensembl" id="ENST00000605216.5">
    <molecule id="A7E2V4-1"/>
    <property type="protein sequence ID" value="ENSP00000474748.1"/>
    <property type="gene ID" value="ENSG00000214655.11"/>
</dbReference>
<dbReference type="GeneID" id="23053"/>
<dbReference type="KEGG" id="hsa:23053"/>
<dbReference type="UCSC" id="uc001jve.4">
    <molecule id="A7E2V4-1"/>
    <property type="organism name" value="human"/>
</dbReference>
<dbReference type="AGR" id="HGNC:23528"/>
<dbReference type="CTD" id="23053"/>
<dbReference type="DisGeNET" id="23053"/>
<dbReference type="GeneCards" id="ZSWIM8"/>
<dbReference type="HGNC" id="HGNC:23528">
    <property type="gene designation" value="ZSWIM8"/>
</dbReference>
<dbReference type="HPA" id="ENSG00000214655">
    <property type="expression patterns" value="Low tissue specificity"/>
</dbReference>
<dbReference type="MIM" id="619213">
    <property type="type" value="gene"/>
</dbReference>
<dbReference type="neXtProt" id="NX_A7E2V4"/>
<dbReference type="OpenTargets" id="ENSG00000214655"/>
<dbReference type="PharmGKB" id="PA134885317"/>
<dbReference type="VEuPathDB" id="HostDB:ENSG00000214655"/>
<dbReference type="eggNOG" id="KOG3615">
    <property type="taxonomic scope" value="Eukaryota"/>
</dbReference>
<dbReference type="GeneTree" id="ENSGT00940000156999"/>
<dbReference type="InParanoid" id="A7E2V4"/>
<dbReference type="OrthoDB" id="10013584at2759"/>
<dbReference type="PAN-GO" id="A7E2V4">
    <property type="GO annotations" value="1 GO annotation based on evolutionary models"/>
</dbReference>
<dbReference type="PhylomeDB" id="A7E2V4"/>
<dbReference type="TreeFam" id="TF324881"/>
<dbReference type="PathwayCommons" id="A7E2V4"/>
<dbReference type="Reactome" id="R-HSA-9010553">
    <property type="pathway name" value="Regulation of expression of SLITs and ROBOs"/>
</dbReference>
<dbReference type="SignaLink" id="A7E2V4"/>
<dbReference type="UniPathway" id="UPA00143"/>
<dbReference type="BioGRID-ORCS" id="23053">
    <property type="hits" value="107 hits in 1161 CRISPR screens"/>
</dbReference>
<dbReference type="ChiTaRS" id="ZSWIM8">
    <property type="organism name" value="human"/>
</dbReference>
<dbReference type="GenomeRNAi" id="23053"/>
<dbReference type="Pharos" id="A7E2V4">
    <property type="development level" value="Tdark"/>
</dbReference>
<dbReference type="PRO" id="PR:A7E2V4"/>
<dbReference type="Proteomes" id="UP000005640">
    <property type="component" value="Chromosome 10"/>
</dbReference>
<dbReference type="RNAct" id="A7E2V4">
    <property type="molecule type" value="protein"/>
</dbReference>
<dbReference type="Bgee" id="ENSG00000214655">
    <property type="expression patterns" value="Expressed in lower esophagus mucosa and 193 other cell types or tissues"/>
</dbReference>
<dbReference type="ExpressionAtlas" id="A7E2V4">
    <property type="expression patterns" value="baseline and differential"/>
</dbReference>
<dbReference type="GO" id="GO:0031462">
    <property type="term" value="C:Cul2-RING ubiquitin ligase complex"/>
    <property type="evidence" value="ECO:0000318"/>
    <property type="project" value="GO_Central"/>
</dbReference>
<dbReference type="GO" id="GO:0031463">
    <property type="term" value="C:Cul3-RING ubiquitin ligase complex"/>
    <property type="evidence" value="ECO:0000314"/>
    <property type="project" value="UniProtKB"/>
</dbReference>
<dbReference type="GO" id="GO:0005829">
    <property type="term" value="C:cytosol"/>
    <property type="evidence" value="ECO:0000250"/>
    <property type="project" value="UniProtKB"/>
</dbReference>
<dbReference type="GO" id="GO:1990756">
    <property type="term" value="F:ubiquitin-like ligase-substrate adaptor activity"/>
    <property type="evidence" value="ECO:0000314"/>
    <property type="project" value="UniProtKB"/>
</dbReference>
<dbReference type="GO" id="GO:0008270">
    <property type="term" value="F:zinc ion binding"/>
    <property type="evidence" value="ECO:0007669"/>
    <property type="project" value="UniProtKB-KW"/>
</dbReference>
<dbReference type="GO" id="GO:2000627">
    <property type="term" value="P:positive regulation of miRNA catabolic process"/>
    <property type="evidence" value="ECO:0000314"/>
    <property type="project" value="UniProtKB"/>
</dbReference>
<dbReference type="GO" id="GO:0043161">
    <property type="term" value="P:proteasome-mediated ubiquitin-dependent protein catabolic process"/>
    <property type="evidence" value="ECO:0000314"/>
    <property type="project" value="UniProtKB"/>
</dbReference>
<dbReference type="GO" id="GO:0006515">
    <property type="term" value="P:protein quality control for misfolded or incompletely synthesized proteins"/>
    <property type="evidence" value="ECO:0000314"/>
    <property type="project" value="UniProt"/>
</dbReference>
<dbReference type="GO" id="GO:0016567">
    <property type="term" value="P:protein ubiquitination"/>
    <property type="evidence" value="ECO:0000314"/>
    <property type="project" value="UniProtKB"/>
</dbReference>
<dbReference type="GO" id="GO:0140958">
    <property type="term" value="P:target-directed miRNA degradation"/>
    <property type="evidence" value="ECO:0000315"/>
    <property type="project" value="FlyBase"/>
</dbReference>
<dbReference type="InterPro" id="IPR007527">
    <property type="entry name" value="Znf_SWIM"/>
</dbReference>
<dbReference type="InterPro" id="IPR048370">
    <property type="entry name" value="ZSWIM4-8_C"/>
</dbReference>
<dbReference type="PANTHER" id="PTHR22619">
    <property type="entry name" value="ZINC FINGER SWIM DOMAIN CONTAINING PROTEIN 4, 5, 6"/>
    <property type="match status" value="1"/>
</dbReference>
<dbReference type="PANTHER" id="PTHR22619:SF1">
    <property type="entry name" value="ZINC FINGER SWIM DOMAIN-CONTAINING PROTEIN 8"/>
    <property type="match status" value="1"/>
</dbReference>
<dbReference type="Pfam" id="PF21055">
    <property type="entry name" value="ZSWIM4-8_C"/>
    <property type="match status" value="1"/>
</dbReference>
<dbReference type="PROSITE" id="PS50966">
    <property type="entry name" value="ZF_SWIM"/>
    <property type="match status" value="1"/>
</dbReference>
<evidence type="ECO:0000250" key="1">
    <source>
        <dbReference type="UniProtKB" id="Q3UHH1"/>
    </source>
</evidence>
<evidence type="ECO:0000255" key="2">
    <source>
        <dbReference type="PROSITE-ProRule" id="PRU00325"/>
    </source>
</evidence>
<evidence type="ECO:0000256" key="3">
    <source>
        <dbReference type="SAM" id="MobiDB-lite"/>
    </source>
</evidence>
<evidence type="ECO:0000269" key="4">
    <source>
    </source>
</evidence>
<evidence type="ECO:0000269" key="5">
    <source>
    </source>
</evidence>
<evidence type="ECO:0000269" key="6">
    <source>
    </source>
</evidence>
<evidence type="ECO:0000269" key="7">
    <source>
    </source>
</evidence>
<evidence type="ECO:0000303" key="8">
    <source>
    </source>
</evidence>
<evidence type="ECO:0000303" key="9">
    <source>
    </source>
</evidence>
<evidence type="ECO:0000303" key="10">
    <source>
    </source>
</evidence>
<evidence type="ECO:0000303" key="11">
    <source>
    </source>
</evidence>
<evidence type="ECO:0000303" key="12">
    <source>
    </source>
</evidence>
<evidence type="ECO:0000303" key="13">
    <source>
    </source>
</evidence>
<evidence type="ECO:0000305" key="14"/>
<evidence type="ECO:0000305" key="15">
    <source>
    </source>
</evidence>
<evidence type="ECO:0000312" key="16">
    <source>
        <dbReference type="HGNC" id="HGNC:23528"/>
    </source>
</evidence>
<evidence type="ECO:0007744" key="17">
    <source>
    </source>
</evidence>
<evidence type="ECO:0007744" key="18">
    <source>
    </source>
</evidence>
<evidence type="ECO:0007744" key="19">
    <source>
    </source>
</evidence>
<keyword id="KW-0025">Alternative splicing</keyword>
<keyword id="KW-0963">Cytoplasm</keyword>
<keyword id="KW-0479">Metal-binding</keyword>
<keyword id="KW-0597">Phosphoprotein</keyword>
<keyword id="KW-1267">Proteomics identification</keyword>
<keyword id="KW-1185">Reference proteome</keyword>
<keyword id="KW-0833">Ubl conjugation pathway</keyword>
<keyword id="KW-0862">Zinc</keyword>
<keyword id="KW-0863">Zinc-finger</keyword>
<comment type="function">
    <text evidence="1 4 5 6">Substrate recognition component of a SCF-like E3 ubiquitin-protein ligase complex that promotes target-directed microRNA degradation (TDMD), a process that mediates degradation of microRNAs (miRNAs) (PubMed:33184234, PubMed:33184237). The SCF-like E3 ubiquitin-protein ligase complex acts by catalyzing ubiquitination and subsequent degradation of AGO proteins (AGO1, AGO2, AGO3 and/or AGO4), thereby exposing miRNAs for degradation (PubMed:33184234, PubMed:33184237). Specifically recognizes and binds AGO proteins when they are engaged with a TDMD target (PubMed:33184234). May also act as a regulator of axon guidance: specifically recognizes misfolded ROBO3 and promotes its ubiquitination and subsequent degradation (PubMed:24012004). Plays an essential role for proper embryonic development of heart and lung (By similarity). Controls protein quality of DAB1, a key signal molecule for brain development, thus protecting its signaling strength. Mechanistically, recognizes intrinsically disordered regions of DAB1 and eliminates misfolded DAB1 that cannot be properly phosphorylated (By similarity).</text>
</comment>
<comment type="function">
    <text evidence="7">(Microbial infection) Participates in Zika virus inhibition of IFN signaling by acting as a scaffold protein to connect ZSWIM8/CUL3 ligase complex and STAT2, leading to STAT2 degradation.</text>
</comment>
<comment type="pathway">
    <text evidence="5 6">Protein modification; protein ubiquitination.</text>
</comment>
<comment type="subunit">
    <text evidence="15">Component of the SCF-like E3 ubiquitin-protein ligase complex which contains CUL3, RBX1, ELOB, ELOC and ZSWIM8.</text>
</comment>
<comment type="subunit">
    <text evidence="7">(Microbial infection) Interacts with Zika virus protein NS5; this interaction allows STAT2 binding and subsequent proteasomal degradation.</text>
</comment>
<comment type="subcellular location">
    <subcellularLocation>
        <location evidence="1">Cytoplasm</location>
        <location evidence="1">Cytosol</location>
    </subcellularLocation>
    <text evidence="1">Translocates together with its substrate into stress granules (SGs) under proteostatic stress.</text>
</comment>
<comment type="alternative products">
    <event type="alternative splicing"/>
    <isoform>
        <id>A7E2V4-1</id>
        <name>1</name>
        <sequence type="displayed"/>
    </isoform>
    <isoform>
        <id>A7E2V4-2</id>
        <name>2</name>
        <sequence type="described" ref="VSP_029590 VSP_029591"/>
    </isoform>
    <isoform>
        <id>A7E2V4-3</id>
        <name>3</name>
        <sequence type="described" ref="VSP_029586 VSP_029587 VSP_029590"/>
    </isoform>
    <isoform>
        <id>A7E2V4-4</id>
        <name>4</name>
        <sequence type="described" ref="VSP_029586"/>
    </isoform>
    <isoform>
        <id>A7E2V4-5</id>
        <name>5</name>
        <sequence type="described" ref="VSP_029590"/>
    </isoform>
</comment>
<comment type="similarity">
    <text evidence="14">Belongs to the ZSWIM8 family.</text>
</comment>
<comment type="sequence caution" evidence="14">
    <conflict type="miscellaneous discrepancy">
        <sequence resource="EMBL-CDS" id="AAI37250"/>
    </conflict>
    <text>Probable cloning artifact.</text>
</comment>
<comment type="sequence caution" evidence="14">
    <conflict type="miscellaneous discrepancy">
        <sequence resource="EMBL-CDS" id="AAI37251"/>
    </conflict>
    <text>Probable cloning artifact.</text>
</comment>
<comment type="sequence caution" evidence="14">
    <conflict type="erroneous initiation">
        <sequence resource="EMBL-CDS" id="BAA74936"/>
    </conflict>
    <text>Extended N-terminus.</text>
</comment>
<comment type="sequence caution" evidence="14">
    <conflict type="miscellaneous discrepancy">
        <sequence resource="EMBL-CDS" id="BAA74936"/>
    </conflict>
    <text>Aberrant splicing.</text>
</comment>
<comment type="sequence caution" evidence="14">
    <conflict type="erroneous initiation">
        <sequence resource="EMBL-CDS" id="BAB14664"/>
    </conflict>
</comment>
<comment type="sequence caution" evidence="14">
    <conflict type="miscellaneous discrepancy">
        <sequence resource="EMBL-CDS" id="BAC03709"/>
    </conflict>
    <text>Probable cloning artifact.</text>
</comment>